<gene>
    <name evidence="1" type="primary">glgA</name>
    <name type="ordered locus">Syncc9902_1331</name>
</gene>
<organism>
    <name type="scientific">Synechococcus sp. (strain CC9902)</name>
    <dbReference type="NCBI Taxonomy" id="316279"/>
    <lineage>
        <taxon>Bacteria</taxon>
        <taxon>Bacillati</taxon>
        <taxon>Cyanobacteriota</taxon>
        <taxon>Cyanophyceae</taxon>
        <taxon>Synechococcales</taxon>
        <taxon>Synechococcaceae</taxon>
        <taxon>Synechococcus</taxon>
    </lineage>
</organism>
<comment type="function">
    <text evidence="1">Synthesizes alpha-1,4-glucan chains using ADP-glucose.</text>
</comment>
<comment type="catalytic activity">
    <reaction evidence="1">
        <text>[(1-&gt;4)-alpha-D-glucosyl](n) + ADP-alpha-D-glucose = [(1-&gt;4)-alpha-D-glucosyl](n+1) + ADP + H(+)</text>
        <dbReference type="Rhea" id="RHEA:18189"/>
        <dbReference type="Rhea" id="RHEA-COMP:9584"/>
        <dbReference type="Rhea" id="RHEA-COMP:9587"/>
        <dbReference type="ChEBI" id="CHEBI:15378"/>
        <dbReference type="ChEBI" id="CHEBI:15444"/>
        <dbReference type="ChEBI" id="CHEBI:57498"/>
        <dbReference type="ChEBI" id="CHEBI:456216"/>
        <dbReference type="EC" id="2.4.1.21"/>
    </reaction>
</comment>
<comment type="pathway">
    <text evidence="1">Glycan biosynthesis; glycogen biosynthesis.</text>
</comment>
<comment type="similarity">
    <text evidence="1">Belongs to the glycosyltransferase 1 family. Bacterial/plant glycogen synthase subfamily.</text>
</comment>
<proteinExistence type="inferred from homology"/>
<name>GLGA_SYNS9</name>
<evidence type="ECO:0000255" key="1">
    <source>
        <dbReference type="HAMAP-Rule" id="MF_00484"/>
    </source>
</evidence>
<evidence type="ECO:0000256" key="2">
    <source>
        <dbReference type="SAM" id="MobiDB-lite"/>
    </source>
</evidence>
<dbReference type="EC" id="2.4.1.21" evidence="1"/>
<dbReference type="EMBL" id="CP000097">
    <property type="protein sequence ID" value="ABB26295.1"/>
    <property type="molecule type" value="Genomic_DNA"/>
</dbReference>
<dbReference type="RefSeq" id="WP_011360118.1">
    <property type="nucleotide sequence ID" value="NC_007513.1"/>
</dbReference>
<dbReference type="SMR" id="Q3AVF9"/>
<dbReference type="STRING" id="316279.Syncc9902_1331"/>
<dbReference type="CAZy" id="GT5">
    <property type="family name" value="Glycosyltransferase Family 5"/>
</dbReference>
<dbReference type="KEGG" id="sye:Syncc9902_1331"/>
<dbReference type="eggNOG" id="COG0297">
    <property type="taxonomic scope" value="Bacteria"/>
</dbReference>
<dbReference type="HOGENOM" id="CLU_009583_18_2_3"/>
<dbReference type="OrthoDB" id="9808590at2"/>
<dbReference type="UniPathway" id="UPA00164"/>
<dbReference type="Proteomes" id="UP000002712">
    <property type="component" value="Chromosome"/>
</dbReference>
<dbReference type="GO" id="GO:0009011">
    <property type="term" value="F:alpha-1,4-glucan glucosyltransferase (ADP-glucose donor) activity"/>
    <property type="evidence" value="ECO:0007669"/>
    <property type="project" value="UniProtKB-UniRule"/>
</dbReference>
<dbReference type="GO" id="GO:0004373">
    <property type="term" value="F:alpha-1,4-glucan glucosyltransferase (UDP-glucose donor) activity"/>
    <property type="evidence" value="ECO:0007669"/>
    <property type="project" value="InterPro"/>
</dbReference>
<dbReference type="GO" id="GO:0005978">
    <property type="term" value="P:glycogen biosynthetic process"/>
    <property type="evidence" value="ECO:0007669"/>
    <property type="project" value="UniProtKB-UniRule"/>
</dbReference>
<dbReference type="CDD" id="cd03791">
    <property type="entry name" value="GT5_Glycogen_synthase_DULL1-like"/>
    <property type="match status" value="1"/>
</dbReference>
<dbReference type="Gene3D" id="3.40.50.2000">
    <property type="entry name" value="Glycogen Phosphorylase B"/>
    <property type="match status" value="2"/>
</dbReference>
<dbReference type="HAMAP" id="MF_00484">
    <property type="entry name" value="Glycogen_synth"/>
    <property type="match status" value="1"/>
</dbReference>
<dbReference type="InterPro" id="IPR001296">
    <property type="entry name" value="Glyco_trans_1"/>
</dbReference>
<dbReference type="InterPro" id="IPR011835">
    <property type="entry name" value="GS/SS"/>
</dbReference>
<dbReference type="InterPro" id="IPR013534">
    <property type="entry name" value="Starch_synth_cat_dom"/>
</dbReference>
<dbReference type="NCBIfam" id="TIGR02095">
    <property type="entry name" value="glgA"/>
    <property type="match status" value="1"/>
</dbReference>
<dbReference type="NCBIfam" id="NF001900">
    <property type="entry name" value="PRK00654.1-3"/>
    <property type="match status" value="1"/>
</dbReference>
<dbReference type="PANTHER" id="PTHR45825:SF11">
    <property type="entry name" value="ALPHA AMYLASE DOMAIN-CONTAINING PROTEIN"/>
    <property type="match status" value="1"/>
</dbReference>
<dbReference type="PANTHER" id="PTHR45825">
    <property type="entry name" value="GRANULE-BOUND STARCH SYNTHASE 1, CHLOROPLASTIC/AMYLOPLASTIC"/>
    <property type="match status" value="1"/>
</dbReference>
<dbReference type="Pfam" id="PF08323">
    <property type="entry name" value="Glyco_transf_5"/>
    <property type="match status" value="1"/>
</dbReference>
<dbReference type="Pfam" id="PF00534">
    <property type="entry name" value="Glycos_transf_1"/>
    <property type="match status" value="1"/>
</dbReference>
<dbReference type="SUPFAM" id="SSF53756">
    <property type="entry name" value="UDP-Glycosyltransferase/glycogen phosphorylase"/>
    <property type="match status" value="1"/>
</dbReference>
<accession>Q3AVF9</accession>
<sequence>MRILFAAAECAPMIKVGGMGDVVGSLPPALAKLGHDVRLIMPGYSQLWSKLQIPDEPIWRAQTMGTEFAVYEAKHPTNGMTIYLVGHPVFDPERIYGGEDEDWRFTFFASAAAEFSWNVWKPQVLHCHDWHTGMIPVWMHQDPEISTVFTIHNLKYQGPWRWKLDRITWCPWYMQGDHTMAAALINADRVNAVSPTYAQEIRTAEYGENLHGLLNFVSGKLRGILNGIDLEAWDPATDKALPANYSAADLTGKAVCKQVLQERMGLEVRDDAFLLGMVTRLVDQKGVDLLLQVADRLLSYTDSQIVVLGTGDRGLESGLWQLASRYPGKCAVFLTYDDDLSRLIYAGSDAFLMPSRFEPCGISQLYAMRYGSVPVVRNVGGLVDTVPPHDPNADRGTGFCFDRFEPVDFYTALVRAWEAYRHRSSWQDLQKRGMTEDYSWDRSAVEYDLMYKDVCGIKEPTPDAALLEQFSRGQDADPSRADQIDVEPSSSSSAPMTPPGRNPLNRLFGRRSG</sequence>
<reference key="1">
    <citation type="submission" date="2005-08" db="EMBL/GenBank/DDBJ databases">
        <title>Complete sequence of Synechococcus sp. CC9902.</title>
        <authorList>
            <person name="Copeland A."/>
            <person name="Lucas S."/>
            <person name="Lapidus A."/>
            <person name="Barry K."/>
            <person name="Detter J.C."/>
            <person name="Glavina T."/>
            <person name="Hammon N."/>
            <person name="Israni S."/>
            <person name="Pitluck S."/>
            <person name="Martinez M."/>
            <person name="Schmutz J."/>
            <person name="Larimer F."/>
            <person name="Land M."/>
            <person name="Kyrpides N."/>
            <person name="Ivanova N."/>
            <person name="Richardson P."/>
        </authorList>
    </citation>
    <scope>NUCLEOTIDE SEQUENCE [LARGE SCALE GENOMIC DNA]</scope>
    <source>
        <strain>CC9902</strain>
    </source>
</reference>
<keyword id="KW-0320">Glycogen biosynthesis</keyword>
<keyword id="KW-0328">Glycosyltransferase</keyword>
<keyword id="KW-1185">Reference proteome</keyword>
<keyword id="KW-0808">Transferase</keyword>
<feature type="chain" id="PRO_0000241801" description="Glycogen synthase">
    <location>
        <begin position="1"/>
        <end position="513"/>
    </location>
</feature>
<feature type="region of interest" description="Disordered" evidence="2">
    <location>
        <begin position="471"/>
        <end position="513"/>
    </location>
</feature>
<feature type="compositionally biased region" description="Basic and acidic residues" evidence="2">
    <location>
        <begin position="474"/>
        <end position="483"/>
    </location>
</feature>
<feature type="binding site" evidence="1">
    <location>
        <position position="15"/>
    </location>
    <ligand>
        <name>ADP-alpha-D-glucose</name>
        <dbReference type="ChEBI" id="CHEBI:57498"/>
    </ligand>
</feature>
<protein>
    <recommendedName>
        <fullName evidence="1">Glycogen synthase</fullName>
        <ecNumber evidence="1">2.4.1.21</ecNumber>
    </recommendedName>
    <alternativeName>
        <fullName evidence="1">Starch [bacterial glycogen] synthase</fullName>
    </alternativeName>
</protein>